<dbReference type="EMBL" id="X58711">
    <property type="protein sequence ID" value="CAA41547.1"/>
    <property type="molecule type" value="mRNA"/>
</dbReference>
<dbReference type="PIR" id="S16247">
    <property type="entry name" value="S16247"/>
</dbReference>
<dbReference type="SMR" id="P27880"/>
<dbReference type="GO" id="GO:0005737">
    <property type="term" value="C:cytoplasm"/>
    <property type="evidence" value="ECO:0007669"/>
    <property type="project" value="UniProtKB-SubCell"/>
</dbReference>
<dbReference type="CDD" id="cd06472">
    <property type="entry name" value="ACD_ScHsp26_like"/>
    <property type="match status" value="1"/>
</dbReference>
<dbReference type="FunFam" id="2.60.40.790:FF:000009">
    <property type="entry name" value="17.6 kDa class I heat shock protein-like"/>
    <property type="match status" value="1"/>
</dbReference>
<dbReference type="Gene3D" id="2.60.40.790">
    <property type="match status" value="1"/>
</dbReference>
<dbReference type="InterPro" id="IPR002068">
    <property type="entry name" value="A-crystallin/Hsp20_dom"/>
</dbReference>
<dbReference type="InterPro" id="IPR008978">
    <property type="entry name" value="HSP20-like_chaperone"/>
</dbReference>
<dbReference type="InterPro" id="IPR031107">
    <property type="entry name" value="Small_HSP"/>
</dbReference>
<dbReference type="PANTHER" id="PTHR11527">
    <property type="entry name" value="HEAT-SHOCK PROTEIN 20 FAMILY MEMBER"/>
    <property type="match status" value="1"/>
</dbReference>
<dbReference type="Pfam" id="PF00011">
    <property type="entry name" value="HSP20"/>
    <property type="match status" value="1"/>
</dbReference>
<dbReference type="SUPFAM" id="SSF49764">
    <property type="entry name" value="HSP20-like chaperones"/>
    <property type="match status" value="1"/>
</dbReference>
<dbReference type="PROSITE" id="PS01031">
    <property type="entry name" value="SHSP"/>
    <property type="match status" value="1"/>
</dbReference>
<comment type="subunit">
    <text>Forms oligomeric structures.</text>
</comment>
<comment type="subcellular location">
    <subcellularLocation>
        <location>Cytoplasm</location>
    </subcellularLocation>
</comment>
<comment type="developmental stage">
    <text>Expressed in the early stages of embryogenesis under normal in vitro culture conditions.</text>
</comment>
<comment type="induction">
    <text>By stress.</text>
</comment>
<comment type="similarity">
    <text evidence="1">Belongs to the small heat shock protein (HSP20) family.</text>
</comment>
<protein>
    <recommendedName>
        <fullName>18.2 kDa class I heat shock protein</fullName>
    </recommendedName>
</protein>
<organism>
    <name type="scientific">Medicago sativa</name>
    <name type="common">Alfalfa</name>
    <dbReference type="NCBI Taxonomy" id="3879"/>
    <lineage>
        <taxon>Eukaryota</taxon>
        <taxon>Viridiplantae</taxon>
        <taxon>Streptophyta</taxon>
        <taxon>Embryophyta</taxon>
        <taxon>Tracheophyta</taxon>
        <taxon>Spermatophyta</taxon>
        <taxon>Magnoliopsida</taxon>
        <taxon>eudicotyledons</taxon>
        <taxon>Gunneridae</taxon>
        <taxon>Pentapetalae</taxon>
        <taxon>rosids</taxon>
        <taxon>fabids</taxon>
        <taxon>Fabales</taxon>
        <taxon>Fabaceae</taxon>
        <taxon>Papilionoideae</taxon>
        <taxon>50 kb inversion clade</taxon>
        <taxon>NPAAA clade</taxon>
        <taxon>Hologalegina</taxon>
        <taxon>IRL clade</taxon>
        <taxon>Trifolieae</taxon>
        <taxon>Medicago</taxon>
    </lineage>
</organism>
<proteinExistence type="evidence at transcript level"/>
<name>HSP12_MEDSA</name>
<sequence length="158" mass="18166">MSLIPSFFGGRRSNVFDPFSLDVWDPFKDFPFNNSALSASFPRENSAFVSTRVDWKETPEAHVFKADLPGMKKEEVKVEIEDDRVLQISGERSVEKEDKNDQWHRLERSSGKFMRRFRLPENAKMDQVKAAMENGVLTVTVPKEEVKKPEVKTIDISG</sequence>
<evidence type="ECO:0000255" key="1">
    <source>
        <dbReference type="PROSITE-ProRule" id="PRU00285"/>
    </source>
</evidence>
<reference key="1">
    <citation type="journal article" date="1991" name="Plant Mol. Biol.">
        <title>Alfalfa heat shock genes are differentially expressed during somatic embryogenesis.</title>
        <authorList>
            <person name="Gyorgyey J."/>
            <person name="Gartner A."/>
            <person name="Nemeth K."/>
            <person name="Magyar Z."/>
            <person name="Hirt H."/>
            <person name="Heberle-Bors E."/>
            <person name="Dudits D."/>
        </authorList>
    </citation>
    <scope>NUCLEOTIDE SEQUENCE [MRNA]</scope>
    <source>
        <strain>cv. RA3</strain>
    </source>
</reference>
<accession>P27880</accession>
<feature type="chain" id="PRO_0000125979" description="18.2 kDa class I heat shock protein">
    <location>
        <begin position="1"/>
        <end position="158"/>
    </location>
</feature>
<feature type="domain" description="sHSP" evidence="1">
    <location>
        <begin position="44"/>
        <end position="158"/>
    </location>
</feature>
<keyword id="KW-0963">Cytoplasm</keyword>
<keyword id="KW-0346">Stress response</keyword>
<gene>
    <name type="primary">HSP18.2</name>
</gene>